<dbReference type="EC" id="7.6.2.-" evidence="1"/>
<dbReference type="EMBL" id="BX897700">
    <property type="protein sequence ID" value="CAF26074.1"/>
    <property type="molecule type" value="Genomic_DNA"/>
</dbReference>
<dbReference type="RefSeq" id="WP_011179344.1">
    <property type="nucleotide sequence ID" value="NC_005955.1"/>
</dbReference>
<dbReference type="SMR" id="Q6FZX3"/>
<dbReference type="KEGG" id="bqu:BQ05820"/>
<dbReference type="eggNOG" id="COG1136">
    <property type="taxonomic scope" value="Bacteria"/>
</dbReference>
<dbReference type="HOGENOM" id="CLU_000604_1_22_5"/>
<dbReference type="OrthoDB" id="9802264at2"/>
<dbReference type="Proteomes" id="UP000000597">
    <property type="component" value="Chromosome"/>
</dbReference>
<dbReference type="GO" id="GO:0005886">
    <property type="term" value="C:plasma membrane"/>
    <property type="evidence" value="ECO:0007669"/>
    <property type="project" value="UniProtKB-SubCell"/>
</dbReference>
<dbReference type="GO" id="GO:0005524">
    <property type="term" value="F:ATP binding"/>
    <property type="evidence" value="ECO:0007669"/>
    <property type="project" value="UniProtKB-KW"/>
</dbReference>
<dbReference type="GO" id="GO:0016887">
    <property type="term" value="F:ATP hydrolysis activity"/>
    <property type="evidence" value="ECO:0007669"/>
    <property type="project" value="InterPro"/>
</dbReference>
<dbReference type="GO" id="GO:0022857">
    <property type="term" value="F:transmembrane transporter activity"/>
    <property type="evidence" value="ECO:0007669"/>
    <property type="project" value="TreeGrafter"/>
</dbReference>
<dbReference type="GO" id="GO:0044874">
    <property type="term" value="P:lipoprotein localization to outer membrane"/>
    <property type="evidence" value="ECO:0007669"/>
    <property type="project" value="TreeGrafter"/>
</dbReference>
<dbReference type="GO" id="GO:0089705">
    <property type="term" value="P:protein localization to outer membrane"/>
    <property type="evidence" value="ECO:0007669"/>
    <property type="project" value="TreeGrafter"/>
</dbReference>
<dbReference type="CDD" id="cd03255">
    <property type="entry name" value="ABC_MJ0796_LolCDE_FtsE"/>
    <property type="match status" value="1"/>
</dbReference>
<dbReference type="Gene3D" id="3.40.50.300">
    <property type="entry name" value="P-loop containing nucleotide triphosphate hydrolases"/>
    <property type="match status" value="1"/>
</dbReference>
<dbReference type="InterPro" id="IPR003593">
    <property type="entry name" value="AAA+_ATPase"/>
</dbReference>
<dbReference type="InterPro" id="IPR003439">
    <property type="entry name" value="ABC_transporter-like_ATP-bd"/>
</dbReference>
<dbReference type="InterPro" id="IPR017871">
    <property type="entry name" value="ABC_transporter-like_CS"/>
</dbReference>
<dbReference type="InterPro" id="IPR015854">
    <property type="entry name" value="ABC_transpr_LolD-like"/>
</dbReference>
<dbReference type="InterPro" id="IPR017911">
    <property type="entry name" value="MacB-like_ATP-bd"/>
</dbReference>
<dbReference type="InterPro" id="IPR027417">
    <property type="entry name" value="P-loop_NTPase"/>
</dbReference>
<dbReference type="PANTHER" id="PTHR24220">
    <property type="entry name" value="IMPORT ATP-BINDING PROTEIN"/>
    <property type="match status" value="1"/>
</dbReference>
<dbReference type="PANTHER" id="PTHR24220:SF689">
    <property type="entry name" value="LIPOPROTEIN-RELEASING SYSTEM ATP-BINDING PROTEIN LOLD"/>
    <property type="match status" value="1"/>
</dbReference>
<dbReference type="Pfam" id="PF00005">
    <property type="entry name" value="ABC_tran"/>
    <property type="match status" value="1"/>
</dbReference>
<dbReference type="SMART" id="SM00382">
    <property type="entry name" value="AAA"/>
    <property type="match status" value="1"/>
</dbReference>
<dbReference type="SUPFAM" id="SSF52540">
    <property type="entry name" value="P-loop containing nucleoside triphosphate hydrolases"/>
    <property type="match status" value="1"/>
</dbReference>
<dbReference type="PROSITE" id="PS00211">
    <property type="entry name" value="ABC_TRANSPORTER_1"/>
    <property type="match status" value="1"/>
</dbReference>
<dbReference type="PROSITE" id="PS50893">
    <property type="entry name" value="ABC_TRANSPORTER_2"/>
    <property type="match status" value="1"/>
</dbReference>
<dbReference type="PROSITE" id="PS51244">
    <property type="entry name" value="LOLD"/>
    <property type="match status" value="1"/>
</dbReference>
<sequence>MAAILELVEIERHFFESHKPLIILDKANFILNRGELVALVAPSGAGKSTLLHIAGLLEKPTAGDVILRGVSCAKRSDNERTAIRRNDIGFVYQFHHLLPEFTALENIIIPQMIAGFKKSIAEDRALKLLTYLRVSHRANHRPSELSGGEQQRVAIARAVANGPSVLLADEPTGNLDPVTSAYVFQALSALVRQSGLSALIATHNYGLAKQMHRRITLKEKKIVELP</sequence>
<comment type="function">
    <text evidence="1">Part of the ABC transporter complex LolCDE involved in the translocation of mature outer membrane-directed lipoproteins, from the inner membrane to the periplasmic chaperone, LolA. Responsible for the formation of the LolA-lipoprotein complex in an ATP-dependent manner.</text>
</comment>
<comment type="subunit">
    <text evidence="1">The complex is composed of two ATP-binding proteins (LolD) and two transmembrane proteins (LolC and LolE).</text>
</comment>
<comment type="subcellular location">
    <subcellularLocation>
        <location evidence="1">Cell inner membrane</location>
        <topology evidence="1">Peripheral membrane protein</topology>
    </subcellularLocation>
</comment>
<comment type="similarity">
    <text evidence="1">Belongs to the ABC transporter superfamily. Lipoprotein translocase (TC 3.A.1.125) family.</text>
</comment>
<proteinExistence type="inferred from homology"/>
<feature type="chain" id="PRO_0000272059" description="Lipoprotein-releasing system ATP-binding protein LolD">
    <location>
        <begin position="1"/>
        <end position="226"/>
    </location>
</feature>
<feature type="domain" description="ABC transporter" evidence="1">
    <location>
        <begin position="5"/>
        <end position="225"/>
    </location>
</feature>
<feature type="binding site" evidence="1">
    <location>
        <begin position="41"/>
        <end position="48"/>
    </location>
    <ligand>
        <name>ATP</name>
        <dbReference type="ChEBI" id="CHEBI:30616"/>
    </ligand>
</feature>
<reference key="1">
    <citation type="journal article" date="2004" name="Proc. Natl. Acad. Sci. U.S.A.">
        <title>The louse-borne human pathogen Bartonella quintana is a genomic derivative of the zoonotic agent Bartonella henselae.</title>
        <authorList>
            <person name="Alsmark U.C.M."/>
            <person name="Frank A.C."/>
            <person name="Karlberg E.O."/>
            <person name="Legault B.-A."/>
            <person name="Ardell D.H."/>
            <person name="Canbaeck B."/>
            <person name="Eriksson A.-S."/>
            <person name="Naeslund A.K."/>
            <person name="Handley S.A."/>
            <person name="Huvet M."/>
            <person name="La Scola B."/>
            <person name="Holmberg M."/>
            <person name="Andersson S.G.E."/>
        </authorList>
    </citation>
    <scope>NUCLEOTIDE SEQUENCE [LARGE SCALE GENOMIC DNA]</scope>
    <source>
        <strain>Toulouse</strain>
    </source>
</reference>
<keyword id="KW-0067">ATP-binding</keyword>
<keyword id="KW-0997">Cell inner membrane</keyword>
<keyword id="KW-1003">Cell membrane</keyword>
<keyword id="KW-0472">Membrane</keyword>
<keyword id="KW-0547">Nucleotide-binding</keyword>
<keyword id="KW-1278">Translocase</keyword>
<keyword id="KW-0813">Transport</keyword>
<protein>
    <recommendedName>
        <fullName evidence="1">Lipoprotein-releasing system ATP-binding protein LolD</fullName>
        <ecNumber evidence="1">7.6.2.-</ecNumber>
    </recommendedName>
</protein>
<gene>
    <name evidence="1" type="primary">lolD</name>
    <name type="ordered locus">BQ05820</name>
</gene>
<name>LOLD_BARQU</name>
<organism>
    <name type="scientific">Bartonella quintana (strain Toulouse)</name>
    <name type="common">Rochalimaea quintana</name>
    <dbReference type="NCBI Taxonomy" id="283165"/>
    <lineage>
        <taxon>Bacteria</taxon>
        <taxon>Pseudomonadati</taxon>
        <taxon>Pseudomonadota</taxon>
        <taxon>Alphaproteobacteria</taxon>
        <taxon>Hyphomicrobiales</taxon>
        <taxon>Bartonellaceae</taxon>
        <taxon>Bartonella</taxon>
    </lineage>
</organism>
<accession>Q6FZX3</accession>
<evidence type="ECO:0000255" key="1">
    <source>
        <dbReference type="HAMAP-Rule" id="MF_01708"/>
    </source>
</evidence>